<gene>
    <name evidence="1" type="primary">ureD</name>
    <name type="ordered locus">PSPPH_4474</name>
</gene>
<sequence>MNLPANTALFTPSWHAELELGYGRFDDCTRPTQRRHKGPLRVQKHLYAEGPQVCQHIIVHPPGGIAGGDRLDISATVGADAWAQLTSPGAAKWYRAASPAFQQLELHVQPGATLEWLPQETIVFSNAQAELTTRIELHGDAKLCYWDVVALGRPASGERFEQGHFQSHLDIRRDGTLLWHERQRIIGGDGLLDSPIGLDGKTVFATLLLTGEVSSDLLEACRSLSMPNPVRGDLTQLPGLVVARCLADEALHARAWLIQIWKYLRPALLGRQAVTPRIWNT</sequence>
<organism>
    <name type="scientific">Pseudomonas savastanoi pv. phaseolicola (strain 1448A / Race 6)</name>
    <name type="common">Pseudomonas syringae pv. phaseolicola (strain 1448A / Race 6)</name>
    <dbReference type="NCBI Taxonomy" id="264730"/>
    <lineage>
        <taxon>Bacteria</taxon>
        <taxon>Pseudomonadati</taxon>
        <taxon>Pseudomonadota</taxon>
        <taxon>Gammaproteobacteria</taxon>
        <taxon>Pseudomonadales</taxon>
        <taxon>Pseudomonadaceae</taxon>
        <taxon>Pseudomonas</taxon>
    </lineage>
</organism>
<comment type="function">
    <text evidence="1">Required for maturation of urease via the functional incorporation of the urease nickel metallocenter.</text>
</comment>
<comment type="subunit">
    <text evidence="1">UreD, UreF and UreG form a complex that acts as a GTP-hydrolysis-dependent molecular chaperone, activating the urease apoprotein by helping to assemble the nickel containing metallocenter of UreC. The UreE protein probably delivers the nickel.</text>
</comment>
<comment type="subcellular location">
    <subcellularLocation>
        <location evidence="1">Cytoplasm</location>
    </subcellularLocation>
</comment>
<comment type="similarity">
    <text evidence="1">Belongs to the UreD family.</text>
</comment>
<dbReference type="EMBL" id="CP000058">
    <property type="protein sequence ID" value="AAZ36709.1"/>
    <property type="molecule type" value="Genomic_DNA"/>
</dbReference>
<dbReference type="RefSeq" id="WP_011169574.1">
    <property type="nucleotide sequence ID" value="NC_005773.3"/>
</dbReference>
<dbReference type="SMR" id="Q48DF1"/>
<dbReference type="KEGG" id="psp:PSPPH_4474"/>
<dbReference type="eggNOG" id="COG0829">
    <property type="taxonomic scope" value="Bacteria"/>
</dbReference>
<dbReference type="HOGENOM" id="CLU_056339_0_0_6"/>
<dbReference type="Proteomes" id="UP000000551">
    <property type="component" value="Chromosome"/>
</dbReference>
<dbReference type="GO" id="GO:0005737">
    <property type="term" value="C:cytoplasm"/>
    <property type="evidence" value="ECO:0007669"/>
    <property type="project" value="UniProtKB-SubCell"/>
</dbReference>
<dbReference type="GO" id="GO:0016151">
    <property type="term" value="F:nickel cation binding"/>
    <property type="evidence" value="ECO:0007669"/>
    <property type="project" value="UniProtKB-UniRule"/>
</dbReference>
<dbReference type="HAMAP" id="MF_01384">
    <property type="entry name" value="UreD"/>
    <property type="match status" value="1"/>
</dbReference>
<dbReference type="InterPro" id="IPR002669">
    <property type="entry name" value="UreD"/>
</dbReference>
<dbReference type="PANTHER" id="PTHR33643">
    <property type="entry name" value="UREASE ACCESSORY PROTEIN D"/>
    <property type="match status" value="1"/>
</dbReference>
<dbReference type="PANTHER" id="PTHR33643:SF1">
    <property type="entry name" value="UREASE ACCESSORY PROTEIN D"/>
    <property type="match status" value="1"/>
</dbReference>
<dbReference type="Pfam" id="PF01774">
    <property type="entry name" value="UreD"/>
    <property type="match status" value="1"/>
</dbReference>
<proteinExistence type="inferred from homology"/>
<keyword id="KW-0143">Chaperone</keyword>
<keyword id="KW-0963">Cytoplasm</keyword>
<keyword id="KW-0996">Nickel insertion</keyword>
<protein>
    <recommendedName>
        <fullName evidence="1">Urease accessory protein UreD</fullName>
    </recommendedName>
</protein>
<reference key="1">
    <citation type="journal article" date="2005" name="J. Bacteriol.">
        <title>Whole-genome sequence analysis of Pseudomonas syringae pv. phaseolicola 1448A reveals divergence among pathovars in genes involved in virulence and transposition.</title>
        <authorList>
            <person name="Joardar V."/>
            <person name="Lindeberg M."/>
            <person name="Jackson R.W."/>
            <person name="Selengut J."/>
            <person name="Dodson R."/>
            <person name="Brinkac L.M."/>
            <person name="Daugherty S.C."/>
            <person name="DeBoy R.T."/>
            <person name="Durkin A.S."/>
            <person name="Gwinn Giglio M."/>
            <person name="Madupu R."/>
            <person name="Nelson W.C."/>
            <person name="Rosovitz M.J."/>
            <person name="Sullivan S.A."/>
            <person name="Crabtree J."/>
            <person name="Creasy T."/>
            <person name="Davidsen T.M."/>
            <person name="Haft D.H."/>
            <person name="Zafar N."/>
            <person name="Zhou L."/>
            <person name="Halpin R."/>
            <person name="Holley T."/>
            <person name="Khouri H.M."/>
            <person name="Feldblyum T.V."/>
            <person name="White O."/>
            <person name="Fraser C.M."/>
            <person name="Chatterjee A.K."/>
            <person name="Cartinhour S."/>
            <person name="Schneider D."/>
            <person name="Mansfield J.W."/>
            <person name="Collmer A."/>
            <person name="Buell R."/>
        </authorList>
    </citation>
    <scope>NUCLEOTIDE SEQUENCE [LARGE SCALE GENOMIC DNA]</scope>
    <source>
        <strain>1448A / Race 6</strain>
    </source>
</reference>
<accession>Q48DF1</accession>
<feature type="chain" id="PRO_0000340493" description="Urease accessory protein UreD">
    <location>
        <begin position="1"/>
        <end position="281"/>
    </location>
</feature>
<name>URED_PSE14</name>
<evidence type="ECO:0000255" key="1">
    <source>
        <dbReference type="HAMAP-Rule" id="MF_01384"/>
    </source>
</evidence>